<evidence type="ECO:0000250" key="1"/>
<evidence type="ECO:0000250" key="2">
    <source>
        <dbReference type="UniProtKB" id="F1M0Z1"/>
    </source>
</evidence>
<evidence type="ECO:0000250" key="3">
    <source>
        <dbReference type="UniProtKB" id="O75962"/>
    </source>
</evidence>
<evidence type="ECO:0000255" key="4">
    <source>
        <dbReference type="PROSITE-ProRule" id="PRU00056"/>
    </source>
</evidence>
<evidence type="ECO:0000255" key="5">
    <source>
        <dbReference type="PROSITE-ProRule" id="PRU00062"/>
    </source>
</evidence>
<evidence type="ECO:0000255" key="6">
    <source>
        <dbReference type="PROSITE-ProRule" id="PRU00114"/>
    </source>
</evidence>
<evidence type="ECO:0000255" key="7">
    <source>
        <dbReference type="PROSITE-ProRule" id="PRU00145"/>
    </source>
</evidence>
<evidence type="ECO:0000255" key="8">
    <source>
        <dbReference type="PROSITE-ProRule" id="PRU00159"/>
    </source>
</evidence>
<evidence type="ECO:0000255" key="9">
    <source>
        <dbReference type="PROSITE-ProRule" id="PRU00192"/>
    </source>
</evidence>
<evidence type="ECO:0000255" key="10">
    <source>
        <dbReference type="PROSITE-ProRule" id="PRU10027"/>
    </source>
</evidence>
<evidence type="ECO:0000256" key="11">
    <source>
        <dbReference type="SAM" id="MobiDB-lite"/>
    </source>
</evidence>
<evidence type="ECO:0000269" key="12">
    <source>
    </source>
</evidence>
<evidence type="ECO:0000269" key="13">
    <source>
    </source>
</evidence>
<evidence type="ECO:0000269" key="14">
    <source>
    </source>
</evidence>
<evidence type="ECO:0000303" key="15">
    <source>
    </source>
</evidence>
<evidence type="ECO:0000303" key="16">
    <source>
    </source>
</evidence>
<evidence type="ECO:0000303" key="17">
    <source>
    </source>
</evidence>
<evidence type="ECO:0000305" key="18"/>
<evidence type="ECO:0007744" key="19">
    <source>
    </source>
</evidence>
<evidence type="ECO:0007744" key="20">
    <source>
    </source>
</evidence>
<gene>
    <name type="primary">Trio</name>
</gene>
<dbReference type="EC" id="2.7.11.1"/>
<dbReference type="EMBL" id="AB106872">
    <property type="protein sequence ID" value="BAF30811.1"/>
    <property type="molecule type" value="mRNA"/>
</dbReference>
<dbReference type="EMBL" id="AC107452">
    <property type="status" value="NOT_ANNOTATED_CDS"/>
    <property type="molecule type" value="Genomic_DNA"/>
</dbReference>
<dbReference type="EMBL" id="AC116808">
    <property type="status" value="NOT_ANNOTATED_CDS"/>
    <property type="molecule type" value="Genomic_DNA"/>
</dbReference>
<dbReference type="EMBL" id="AC120373">
    <property type="status" value="NOT_ANNOTATED_CDS"/>
    <property type="molecule type" value="Genomic_DNA"/>
</dbReference>
<dbReference type="EMBL" id="AC130219">
    <property type="status" value="NOT_ANNOTATED_CDS"/>
    <property type="molecule type" value="Genomic_DNA"/>
</dbReference>
<dbReference type="EMBL" id="BC051169">
    <property type="protein sequence ID" value="AAH51169.1"/>
    <property type="molecule type" value="mRNA"/>
</dbReference>
<dbReference type="EMBL" id="BC060724">
    <property type="status" value="NOT_ANNOTATED_CDS"/>
    <property type="molecule type" value="mRNA"/>
</dbReference>
<dbReference type="EMBL" id="AK153924">
    <property type="protein sequence ID" value="BAE32258.1"/>
    <property type="status" value="ALT_INIT"/>
    <property type="molecule type" value="mRNA"/>
</dbReference>
<dbReference type="CCDS" id="CCDS49587.1">
    <molecule id="Q0KL02-4"/>
</dbReference>
<dbReference type="RefSeq" id="NP_001074771.1">
    <molecule id="Q0KL02-4"/>
    <property type="nucleotide sequence ID" value="NM_001081302.1"/>
</dbReference>
<dbReference type="RefSeq" id="XP_006520117.1">
    <molecule id="Q0KL02-2"/>
    <property type="nucleotide sequence ID" value="XM_006520054.5"/>
</dbReference>
<dbReference type="SMR" id="Q0KL02"/>
<dbReference type="BioGRID" id="230148">
    <property type="interactions" value="13"/>
</dbReference>
<dbReference type="FunCoup" id="Q0KL02">
    <property type="interactions" value="1802"/>
</dbReference>
<dbReference type="IntAct" id="Q0KL02">
    <property type="interactions" value="6"/>
</dbReference>
<dbReference type="MINT" id="Q0KL02"/>
<dbReference type="STRING" id="10090.ENSMUSP00000087714"/>
<dbReference type="GlyGen" id="Q0KL02">
    <property type="glycosylation" value="4 sites, 1 N-linked glycan (1 site), 1 O-linked glycan (2 sites)"/>
</dbReference>
<dbReference type="iPTMnet" id="Q0KL02"/>
<dbReference type="PhosphoSitePlus" id="Q0KL02"/>
<dbReference type="SwissPalm" id="Q0KL02"/>
<dbReference type="jPOST" id="Q0KL02"/>
<dbReference type="PaxDb" id="10090-ENSMUSP00000087714"/>
<dbReference type="PeptideAtlas" id="Q0KL02"/>
<dbReference type="ProteomicsDB" id="259098">
    <molecule id="Q0KL02-1"/>
</dbReference>
<dbReference type="ProteomicsDB" id="259099">
    <molecule id="Q0KL02-2"/>
</dbReference>
<dbReference type="ProteomicsDB" id="259100">
    <molecule id="Q0KL02-3"/>
</dbReference>
<dbReference type="ProteomicsDB" id="259101">
    <molecule id="Q0KL02-4"/>
</dbReference>
<dbReference type="Pumba" id="Q0KL02"/>
<dbReference type="Antibodypedia" id="2116">
    <property type="antibodies" value="77 antibodies from 19 providers"/>
</dbReference>
<dbReference type="Ensembl" id="ENSMUST00000090247.7">
    <molecule id="Q0KL02-4"/>
    <property type="protein sequence ID" value="ENSMUSP00000087714.6"/>
    <property type="gene ID" value="ENSMUSG00000022263.11"/>
</dbReference>
<dbReference type="GeneID" id="223435"/>
<dbReference type="KEGG" id="mmu:223435"/>
<dbReference type="UCSC" id="uc007vjw.1">
    <molecule id="Q0KL02-4"/>
    <property type="organism name" value="mouse"/>
</dbReference>
<dbReference type="UCSC" id="uc007vjx.1">
    <molecule id="Q0KL02-3"/>
    <property type="organism name" value="mouse"/>
</dbReference>
<dbReference type="AGR" id="MGI:1927230"/>
<dbReference type="CTD" id="7204"/>
<dbReference type="MGI" id="MGI:1927230">
    <property type="gene designation" value="Trio"/>
</dbReference>
<dbReference type="VEuPathDB" id="HostDB:ENSMUSG00000022263"/>
<dbReference type="eggNOG" id="KOG0032">
    <property type="taxonomic scope" value="Eukaryota"/>
</dbReference>
<dbReference type="eggNOG" id="KOG4240">
    <property type="taxonomic scope" value="Eukaryota"/>
</dbReference>
<dbReference type="GeneTree" id="ENSGT00940000154766"/>
<dbReference type="HOGENOM" id="CLU_000373_1_0_1"/>
<dbReference type="InParanoid" id="Q0KL02"/>
<dbReference type="OMA" id="IRYLHNC"/>
<dbReference type="OrthoDB" id="21767at9989"/>
<dbReference type="PhylomeDB" id="Q0KL02"/>
<dbReference type="TreeFam" id="TF318080"/>
<dbReference type="Reactome" id="R-MMU-193648">
    <property type="pathway name" value="NRAGE signals death through JNK"/>
</dbReference>
<dbReference type="Reactome" id="R-MMU-416476">
    <property type="pathway name" value="G alpha (q) signalling events"/>
</dbReference>
<dbReference type="Reactome" id="R-MMU-416482">
    <property type="pathway name" value="G alpha (12/13) signalling events"/>
</dbReference>
<dbReference type="Reactome" id="R-MMU-418885">
    <property type="pathway name" value="DCC mediated attractive signaling"/>
</dbReference>
<dbReference type="Reactome" id="R-MMU-8980692">
    <property type="pathway name" value="RHOA GTPase cycle"/>
</dbReference>
<dbReference type="Reactome" id="R-MMU-9013148">
    <property type="pathway name" value="CDC42 GTPase cycle"/>
</dbReference>
<dbReference type="Reactome" id="R-MMU-9013149">
    <property type="pathway name" value="RAC1 GTPase cycle"/>
</dbReference>
<dbReference type="Reactome" id="R-MMU-9013404">
    <property type="pathway name" value="RAC2 GTPase cycle"/>
</dbReference>
<dbReference type="Reactome" id="R-MMU-9013408">
    <property type="pathway name" value="RHOG GTPase cycle"/>
</dbReference>
<dbReference type="Reactome" id="R-MMU-9013409">
    <property type="pathway name" value="RHOJ GTPase cycle"/>
</dbReference>
<dbReference type="Reactome" id="R-MMU-9013423">
    <property type="pathway name" value="RAC3 GTPase cycle"/>
</dbReference>
<dbReference type="BioGRID-ORCS" id="223435">
    <property type="hits" value="4 hits in 79 CRISPR screens"/>
</dbReference>
<dbReference type="CD-CODE" id="CE726F99">
    <property type="entry name" value="Postsynaptic density"/>
</dbReference>
<dbReference type="ChiTaRS" id="Trio">
    <property type="organism name" value="mouse"/>
</dbReference>
<dbReference type="PRO" id="PR:Q0KL02"/>
<dbReference type="Proteomes" id="UP000000589">
    <property type="component" value="Chromosome 15"/>
</dbReference>
<dbReference type="RNAct" id="Q0KL02">
    <property type="molecule type" value="protein"/>
</dbReference>
<dbReference type="Bgee" id="ENSMUSG00000022263">
    <property type="expression patterns" value="Expressed in lateral septal nucleus and 263 other cell types or tissues"/>
</dbReference>
<dbReference type="ExpressionAtlas" id="Q0KL02">
    <property type="expression patterns" value="baseline and differential"/>
</dbReference>
<dbReference type="GO" id="GO:0042995">
    <property type="term" value="C:cell projection"/>
    <property type="evidence" value="ECO:0007669"/>
    <property type="project" value="UniProtKB-SubCell"/>
</dbReference>
<dbReference type="GO" id="GO:0005769">
    <property type="term" value="C:early endosome"/>
    <property type="evidence" value="ECO:0007669"/>
    <property type="project" value="UniProtKB-SubCell"/>
</dbReference>
<dbReference type="GO" id="GO:0098978">
    <property type="term" value="C:glutamatergic synapse"/>
    <property type="evidence" value="ECO:0007669"/>
    <property type="project" value="Ensembl"/>
</dbReference>
<dbReference type="GO" id="GO:0098794">
    <property type="term" value="C:postsynapse"/>
    <property type="evidence" value="ECO:0007669"/>
    <property type="project" value="GOC"/>
</dbReference>
<dbReference type="GO" id="GO:0048786">
    <property type="term" value="C:presynaptic active zone"/>
    <property type="evidence" value="ECO:0007669"/>
    <property type="project" value="Ensembl"/>
</dbReference>
<dbReference type="GO" id="GO:0005524">
    <property type="term" value="F:ATP binding"/>
    <property type="evidence" value="ECO:0007669"/>
    <property type="project" value="UniProtKB-KW"/>
</dbReference>
<dbReference type="GO" id="GO:0005085">
    <property type="term" value="F:guanyl-nucleotide exchange factor activity"/>
    <property type="evidence" value="ECO:0007669"/>
    <property type="project" value="UniProtKB-KW"/>
</dbReference>
<dbReference type="GO" id="GO:0106310">
    <property type="term" value="F:protein serine kinase activity"/>
    <property type="evidence" value="ECO:0007669"/>
    <property type="project" value="RHEA"/>
</dbReference>
<dbReference type="GO" id="GO:0004674">
    <property type="term" value="F:protein serine/threonine kinase activity"/>
    <property type="evidence" value="ECO:0007669"/>
    <property type="project" value="UniProtKB-KW"/>
</dbReference>
<dbReference type="GO" id="GO:0045599">
    <property type="term" value="P:negative regulation of fat cell differentiation"/>
    <property type="evidence" value="ECO:0000315"/>
    <property type="project" value="UniProtKB"/>
</dbReference>
<dbReference type="GO" id="GO:0048812">
    <property type="term" value="P:neuron projection morphogenesis"/>
    <property type="evidence" value="ECO:0000250"/>
    <property type="project" value="UniProtKB"/>
</dbReference>
<dbReference type="GO" id="GO:0099170">
    <property type="term" value="P:postsynaptic modulation of chemical synaptic transmission"/>
    <property type="evidence" value="ECO:0007669"/>
    <property type="project" value="Ensembl"/>
</dbReference>
<dbReference type="CDD" id="cd13240">
    <property type="entry name" value="PH1_Kalirin_Trio_like"/>
    <property type="match status" value="1"/>
</dbReference>
<dbReference type="CDD" id="cd13241">
    <property type="entry name" value="PH2_Kalirin_Trio_p63RhoGEF"/>
    <property type="match status" value="1"/>
</dbReference>
<dbReference type="CDD" id="cd00160">
    <property type="entry name" value="RhoGEF"/>
    <property type="match status" value="2"/>
</dbReference>
<dbReference type="CDD" id="cd00170">
    <property type="entry name" value="SEC14"/>
    <property type="match status" value="1"/>
</dbReference>
<dbReference type="CDD" id="cd11852">
    <property type="entry name" value="SH3_Kalirin_1"/>
    <property type="match status" value="1"/>
</dbReference>
<dbReference type="CDD" id="cd11853">
    <property type="entry name" value="SH3_Kalirin_2"/>
    <property type="match status" value="1"/>
</dbReference>
<dbReference type="CDD" id="cd00176">
    <property type="entry name" value="SPEC"/>
    <property type="match status" value="6"/>
</dbReference>
<dbReference type="CDD" id="cd14113">
    <property type="entry name" value="STKc_Trio_C"/>
    <property type="match status" value="1"/>
</dbReference>
<dbReference type="FunFam" id="1.20.900.10:FF:000001">
    <property type="entry name" value="Guanine nucleotide exchange factor DBS"/>
    <property type="match status" value="1"/>
</dbReference>
<dbReference type="FunFam" id="1.10.510.10:FF:000152">
    <property type="entry name" value="kalirin isoform X1"/>
    <property type="match status" value="1"/>
</dbReference>
<dbReference type="FunFam" id="2.30.29.30:FF:000091">
    <property type="entry name" value="kalirin isoform X1"/>
    <property type="match status" value="1"/>
</dbReference>
<dbReference type="FunFam" id="2.30.30.40:FF:000038">
    <property type="entry name" value="kalirin isoform X1"/>
    <property type="match status" value="1"/>
</dbReference>
<dbReference type="FunFam" id="2.30.30.40:FF:000040">
    <property type="entry name" value="kalirin isoform X1"/>
    <property type="match status" value="1"/>
</dbReference>
<dbReference type="FunFam" id="2.60.40.10:FF:000368">
    <property type="entry name" value="kalirin isoform X1"/>
    <property type="match status" value="1"/>
</dbReference>
<dbReference type="FunFam" id="1.20.58.60:FF:000034">
    <property type="entry name" value="kalirin isoform X2"/>
    <property type="match status" value="1"/>
</dbReference>
<dbReference type="FunFam" id="3.40.525.10:FF:000003">
    <property type="entry name" value="kalirin isoform X2"/>
    <property type="match status" value="1"/>
</dbReference>
<dbReference type="FunFam" id="1.20.58.60:FF:000024">
    <property type="entry name" value="Kalirin RhoGEF kinase a"/>
    <property type="match status" value="1"/>
</dbReference>
<dbReference type="FunFam" id="1.20.58.60:FF:000023">
    <property type="entry name" value="Kalirin RhoGEF kinase b"/>
    <property type="match status" value="1"/>
</dbReference>
<dbReference type="FunFam" id="1.20.58.60:FF:000032">
    <property type="entry name" value="Kalirin RhoGEF kinase b"/>
    <property type="match status" value="1"/>
</dbReference>
<dbReference type="FunFam" id="2.30.29.30:FF:000040">
    <property type="entry name" value="Kalirin RhoGEF kinase b"/>
    <property type="match status" value="1"/>
</dbReference>
<dbReference type="FunFam" id="1.20.900.10:FF:000008">
    <property type="entry name" value="rho guanine nucleotide exchange factor 25"/>
    <property type="match status" value="1"/>
</dbReference>
<dbReference type="FunFam" id="1.20.58.60:FF:000015">
    <property type="entry name" value="triple functional domain protein-like"/>
    <property type="match status" value="1"/>
</dbReference>
<dbReference type="Gene3D" id="1.20.58.60">
    <property type="match status" value="5"/>
</dbReference>
<dbReference type="Gene3D" id="3.40.525.10">
    <property type="entry name" value="CRAL-TRIO lipid binding domain"/>
    <property type="match status" value="1"/>
</dbReference>
<dbReference type="Gene3D" id="1.20.900.10">
    <property type="entry name" value="Dbl homology (DH) domain"/>
    <property type="match status" value="2"/>
</dbReference>
<dbReference type="Gene3D" id="2.60.40.10">
    <property type="entry name" value="Immunoglobulins"/>
    <property type="match status" value="1"/>
</dbReference>
<dbReference type="Gene3D" id="3.30.200.20">
    <property type="entry name" value="Phosphorylase Kinase, domain 1"/>
    <property type="match status" value="1"/>
</dbReference>
<dbReference type="Gene3D" id="2.30.29.30">
    <property type="entry name" value="Pleckstrin-homology domain (PH domain)/Phosphotyrosine-binding domain (PTB)"/>
    <property type="match status" value="2"/>
</dbReference>
<dbReference type="Gene3D" id="2.30.30.40">
    <property type="entry name" value="SH3 Domains"/>
    <property type="match status" value="2"/>
</dbReference>
<dbReference type="Gene3D" id="1.10.510.10">
    <property type="entry name" value="Transferase(Phosphotransferase) domain 1"/>
    <property type="match status" value="1"/>
</dbReference>
<dbReference type="InterPro" id="IPR001251">
    <property type="entry name" value="CRAL-TRIO_dom"/>
</dbReference>
<dbReference type="InterPro" id="IPR036865">
    <property type="entry name" value="CRAL-TRIO_dom_sf"/>
</dbReference>
<dbReference type="InterPro" id="IPR035899">
    <property type="entry name" value="DBL_dom_sf"/>
</dbReference>
<dbReference type="InterPro" id="IPR000219">
    <property type="entry name" value="DH_dom"/>
</dbReference>
<dbReference type="InterPro" id="IPR007110">
    <property type="entry name" value="Ig-like_dom"/>
</dbReference>
<dbReference type="InterPro" id="IPR036179">
    <property type="entry name" value="Ig-like_dom_sf"/>
</dbReference>
<dbReference type="InterPro" id="IPR013783">
    <property type="entry name" value="Ig-like_fold"/>
</dbReference>
<dbReference type="InterPro" id="IPR013098">
    <property type="entry name" value="Ig_I-set"/>
</dbReference>
<dbReference type="InterPro" id="IPR003599">
    <property type="entry name" value="Ig_sub"/>
</dbReference>
<dbReference type="InterPro" id="IPR003598">
    <property type="entry name" value="Ig_sub2"/>
</dbReference>
<dbReference type="InterPro" id="IPR047054">
    <property type="entry name" value="Kalirin_TRIO_PH_1"/>
</dbReference>
<dbReference type="InterPro" id="IPR028570">
    <property type="entry name" value="Kalirin_TRIO_SH3_1"/>
</dbReference>
<dbReference type="InterPro" id="IPR047053">
    <property type="entry name" value="Kalirin_TRIO_SH3_2"/>
</dbReference>
<dbReference type="InterPro" id="IPR011009">
    <property type="entry name" value="Kinase-like_dom_sf"/>
</dbReference>
<dbReference type="InterPro" id="IPR011993">
    <property type="entry name" value="PH-like_dom_sf"/>
</dbReference>
<dbReference type="InterPro" id="IPR001849">
    <property type="entry name" value="PH_domain"/>
</dbReference>
<dbReference type="InterPro" id="IPR000719">
    <property type="entry name" value="Prot_kinase_dom"/>
</dbReference>
<dbReference type="InterPro" id="IPR051336">
    <property type="entry name" value="RhoGEF_Guanine_NuclExch_SF"/>
</dbReference>
<dbReference type="InterPro" id="IPR008271">
    <property type="entry name" value="Ser/Thr_kinase_AS"/>
</dbReference>
<dbReference type="InterPro" id="IPR036028">
    <property type="entry name" value="SH3-like_dom_sf"/>
</dbReference>
<dbReference type="InterPro" id="IPR001452">
    <property type="entry name" value="SH3_domain"/>
</dbReference>
<dbReference type="InterPro" id="IPR055251">
    <property type="entry name" value="SOS1_NGEF_PH"/>
</dbReference>
<dbReference type="InterPro" id="IPR018159">
    <property type="entry name" value="Spectrin/alpha-actinin"/>
</dbReference>
<dbReference type="InterPro" id="IPR002017">
    <property type="entry name" value="Spectrin_repeat"/>
</dbReference>
<dbReference type="PANTHER" id="PTHR22826">
    <property type="entry name" value="RHO GUANINE EXCHANGE FACTOR-RELATED"/>
    <property type="match status" value="1"/>
</dbReference>
<dbReference type="PANTHER" id="PTHR22826:SF106">
    <property type="entry name" value="TRIO, ISOFORM A"/>
    <property type="match status" value="1"/>
</dbReference>
<dbReference type="Pfam" id="PF13716">
    <property type="entry name" value="CRAL_TRIO_2"/>
    <property type="match status" value="1"/>
</dbReference>
<dbReference type="Pfam" id="PF07679">
    <property type="entry name" value="I-set"/>
    <property type="match status" value="1"/>
</dbReference>
<dbReference type="Pfam" id="PF00069">
    <property type="entry name" value="Pkinase"/>
    <property type="match status" value="1"/>
</dbReference>
<dbReference type="Pfam" id="PF00621">
    <property type="entry name" value="RhoGEF"/>
    <property type="match status" value="2"/>
</dbReference>
<dbReference type="Pfam" id="PF16609">
    <property type="entry name" value="SH3-RhoG_link"/>
    <property type="match status" value="1"/>
</dbReference>
<dbReference type="Pfam" id="PF00018">
    <property type="entry name" value="SH3_1"/>
    <property type="match status" value="1"/>
</dbReference>
<dbReference type="Pfam" id="PF23587">
    <property type="entry name" value="SH3_KALRN"/>
    <property type="match status" value="1"/>
</dbReference>
<dbReference type="Pfam" id="PF22697">
    <property type="entry name" value="SOS1_NGEF_PH"/>
    <property type="match status" value="2"/>
</dbReference>
<dbReference type="Pfam" id="PF00435">
    <property type="entry name" value="Spectrin"/>
    <property type="match status" value="4"/>
</dbReference>
<dbReference type="Pfam" id="PF23323">
    <property type="entry name" value="Spectrin_6"/>
    <property type="match status" value="1"/>
</dbReference>
<dbReference type="SMART" id="SM00409">
    <property type="entry name" value="IG"/>
    <property type="match status" value="1"/>
</dbReference>
<dbReference type="SMART" id="SM00408">
    <property type="entry name" value="IGc2"/>
    <property type="match status" value="1"/>
</dbReference>
<dbReference type="SMART" id="SM00233">
    <property type="entry name" value="PH"/>
    <property type="match status" value="2"/>
</dbReference>
<dbReference type="SMART" id="SM00325">
    <property type="entry name" value="RhoGEF"/>
    <property type="match status" value="2"/>
</dbReference>
<dbReference type="SMART" id="SM00220">
    <property type="entry name" value="S_TKc"/>
    <property type="match status" value="1"/>
</dbReference>
<dbReference type="SMART" id="SM00516">
    <property type="entry name" value="SEC14"/>
    <property type="match status" value="1"/>
</dbReference>
<dbReference type="SMART" id="SM00326">
    <property type="entry name" value="SH3"/>
    <property type="match status" value="2"/>
</dbReference>
<dbReference type="SMART" id="SM00150">
    <property type="entry name" value="SPEC"/>
    <property type="match status" value="6"/>
</dbReference>
<dbReference type="SUPFAM" id="SSF52087">
    <property type="entry name" value="CRAL/TRIO domain"/>
    <property type="match status" value="1"/>
</dbReference>
<dbReference type="SUPFAM" id="SSF48065">
    <property type="entry name" value="DBL homology domain (DH-domain)"/>
    <property type="match status" value="2"/>
</dbReference>
<dbReference type="SUPFAM" id="SSF48726">
    <property type="entry name" value="Immunoglobulin"/>
    <property type="match status" value="1"/>
</dbReference>
<dbReference type="SUPFAM" id="SSF50729">
    <property type="entry name" value="PH domain-like"/>
    <property type="match status" value="2"/>
</dbReference>
<dbReference type="SUPFAM" id="SSF56112">
    <property type="entry name" value="Protein kinase-like (PK-like)"/>
    <property type="match status" value="1"/>
</dbReference>
<dbReference type="SUPFAM" id="SSF50044">
    <property type="entry name" value="SH3-domain"/>
    <property type="match status" value="2"/>
</dbReference>
<dbReference type="SUPFAM" id="SSF46966">
    <property type="entry name" value="Spectrin repeat"/>
    <property type="match status" value="6"/>
</dbReference>
<dbReference type="PROSITE" id="PS50191">
    <property type="entry name" value="CRAL_TRIO"/>
    <property type="match status" value="1"/>
</dbReference>
<dbReference type="PROSITE" id="PS50010">
    <property type="entry name" value="DH_2"/>
    <property type="match status" value="2"/>
</dbReference>
<dbReference type="PROSITE" id="PS50835">
    <property type="entry name" value="IG_LIKE"/>
    <property type="match status" value="1"/>
</dbReference>
<dbReference type="PROSITE" id="PS50003">
    <property type="entry name" value="PH_DOMAIN"/>
    <property type="match status" value="2"/>
</dbReference>
<dbReference type="PROSITE" id="PS50011">
    <property type="entry name" value="PROTEIN_KINASE_DOM"/>
    <property type="match status" value="1"/>
</dbReference>
<dbReference type="PROSITE" id="PS00108">
    <property type="entry name" value="PROTEIN_KINASE_ST"/>
    <property type="match status" value="1"/>
</dbReference>
<dbReference type="PROSITE" id="PS50002">
    <property type="entry name" value="SH3"/>
    <property type="match status" value="2"/>
</dbReference>
<comment type="function">
    <text evidence="2 3 14">Guanine nucleotide exchange factor (GEF) for RHOA and RAC1 GTPases. Involved in coordinating actin remodeling, which is necessary for cell migration and growth (By similarity). Plays a key role in the regulation of neurite outgrowth and lamellipodia formation (By similarity). In developing hippocampal neurons, limits dendrite formation, without affecting the establishment of axon polarity. Once dendrites are formed, involved in the control of synaptic function by regulating the endocytosis of AMPA-selective glutamate receptors (AMPARs) at CA1 excitatory synapses (By similarity). May act as a regulator of adipogenesis (PubMed:22666460).</text>
</comment>
<comment type="catalytic activity">
    <reaction>
        <text>L-seryl-[protein] + ATP = O-phospho-L-seryl-[protein] + ADP + H(+)</text>
        <dbReference type="Rhea" id="RHEA:17989"/>
        <dbReference type="Rhea" id="RHEA-COMP:9863"/>
        <dbReference type="Rhea" id="RHEA-COMP:11604"/>
        <dbReference type="ChEBI" id="CHEBI:15378"/>
        <dbReference type="ChEBI" id="CHEBI:29999"/>
        <dbReference type="ChEBI" id="CHEBI:30616"/>
        <dbReference type="ChEBI" id="CHEBI:83421"/>
        <dbReference type="ChEBI" id="CHEBI:456216"/>
        <dbReference type="EC" id="2.7.11.1"/>
    </reaction>
</comment>
<comment type="catalytic activity">
    <reaction>
        <text>L-threonyl-[protein] + ATP = O-phospho-L-threonyl-[protein] + ADP + H(+)</text>
        <dbReference type="Rhea" id="RHEA:46608"/>
        <dbReference type="Rhea" id="RHEA-COMP:11060"/>
        <dbReference type="Rhea" id="RHEA-COMP:11605"/>
        <dbReference type="ChEBI" id="CHEBI:15378"/>
        <dbReference type="ChEBI" id="CHEBI:30013"/>
        <dbReference type="ChEBI" id="CHEBI:30616"/>
        <dbReference type="ChEBI" id="CHEBI:61977"/>
        <dbReference type="ChEBI" id="CHEBI:456216"/>
        <dbReference type="EC" id="2.7.11.1"/>
    </reaction>
</comment>
<comment type="subunit">
    <text evidence="2 3">Interacts with CARMIL1. Interacts with PTPRF/LAR. Interacts with ANKRD26 (By similarity). Interacts with Bassoon/BSN and Piccolo/PCLO (By similarity). Interacts with the cytoplasmic region of the heterodimer formed by NGFR and SORCS2. ProNGF binding mediates dissociation of TRIO from the receptor complex (By similarity).</text>
</comment>
<comment type="subcellular location">
    <subcellularLocation>
        <location evidence="13">Cytoplasm</location>
    </subcellularLocation>
    <subcellularLocation>
        <location evidence="12">Cell projection</location>
    </subcellularLocation>
</comment>
<comment type="subcellular location">
    <molecule>Isoform 2</molecule>
    <subcellularLocation>
        <location evidence="13">Early endosome</location>
    </subcellularLocation>
</comment>
<comment type="alternative products">
    <event type="alternative splicing"/>
    <isoform>
        <id>Q0KL02-1</id>
        <name>1</name>
        <sequence type="displayed"/>
    </isoform>
    <isoform>
        <id>Q0KL02-2</id>
        <name>2</name>
        <sequence type="described" ref="VSP_023308 VSP_023309"/>
    </isoform>
    <isoform>
        <id>Q0KL02-3</id>
        <name>3</name>
        <sequence type="described" ref="VSP_037863 VSP_037864 VSP_037865"/>
    </isoform>
    <isoform>
        <id>Q0KL02-4</id>
        <name>4</name>
        <sequence type="described" ref="VSP_037863"/>
    </isoform>
</comment>
<comment type="tissue specificity">
    <text evidence="13">Widespread in the brain, with more intense signals in the hippocampus, olfactory bulb, cortical layers and cerebellum. Isoform 2 is predominantly expressed in Purkinje neurons of brain.</text>
</comment>
<comment type="domain">
    <text evidence="1">The N-terminal DBL/GEF domain specifically catalyzes nucleotide exchange for RAC1, leading to the activation of Jun kinase and the production of membrane ruffles. The second DBL/GEF domain is an exchange factor for rhoa and induces the formation of stress fibers (By similarity).</text>
</comment>
<comment type="similarity">
    <text evidence="18">Belongs to the protein kinase superfamily. CAMK Ser/Thr protein kinase family.</text>
</comment>
<comment type="sequence caution" evidence="18">
    <conflict type="erroneous initiation">
        <sequence resource="EMBL-CDS" id="BAE32258"/>
    </conflict>
    <text>Truncated N-terminus.</text>
</comment>
<accession>Q0KL02</accession>
<accession>Q3U522</accession>
<accession>Q6P9K6</accession>
<accession>Q80W23</accession>
<protein>
    <recommendedName>
        <fullName>Triple functional domain protein</fullName>
        <ecNumber>2.7.11.1</ecNumber>
    </recommendedName>
</protein>
<organism>
    <name type="scientific">Mus musculus</name>
    <name type="common">Mouse</name>
    <dbReference type="NCBI Taxonomy" id="10090"/>
    <lineage>
        <taxon>Eukaryota</taxon>
        <taxon>Metazoa</taxon>
        <taxon>Chordata</taxon>
        <taxon>Craniata</taxon>
        <taxon>Vertebrata</taxon>
        <taxon>Euteleostomi</taxon>
        <taxon>Mammalia</taxon>
        <taxon>Eutheria</taxon>
        <taxon>Euarchontoglires</taxon>
        <taxon>Glires</taxon>
        <taxon>Rodentia</taxon>
        <taxon>Myomorpha</taxon>
        <taxon>Muroidea</taxon>
        <taxon>Muridae</taxon>
        <taxon>Murinae</taxon>
        <taxon>Mus</taxon>
        <taxon>Mus</taxon>
    </lineage>
</organism>
<feature type="chain" id="PRO_0000278474" description="Triple functional domain protein">
    <location>
        <begin position="1"/>
        <end position="3102"/>
    </location>
</feature>
<feature type="domain" description="CRAL-TRIO" evidence="4">
    <location>
        <begin position="65"/>
        <end position="210"/>
    </location>
</feature>
<feature type="repeat" description="Spectrin 1">
    <location>
        <begin position="218"/>
        <end position="338"/>
    </location>
</feature>
<feature type="repeat" description="Spectrin 2">
    <location>
        <begin position="340"/>
        <end position="446"/>
    </location>
</feature>
<feature type="repeat" description="Spectrin 3">
    <location>
        <begin position="566"/>
        <end position="672"/>
    </location>
</feature>
<feature type="repeat" description="Spectrin 4">
    <location>
        <begin position="673"/>
        <end position="784"/>
    </location>
</feature>
<feature type="repeat" description="Spectrin 5">
    <location>
        <begin position="907"/>
        <end position="1012"/>
    </location>
</feature>
<feature type="repeat" description="Spectrin 6">
    <location>
        <begin position="1138"/>
        <end position="1244"/>
    </location>
</feature>
<feature type="domain" description="DH 1" evidence="5">
    <location>
        <begin position="1292"/>
        <end position="1467"/>
    </location>
</feature>
<feature type="domain" description="PH 1" evidence="7">
    <location>
        <begin position="1479"/>
        <end position="1591"/>
    </location>
</feature>
<feature type="domain" description="SH3 1" evidence="9">
    <location>
        <begin position="1656"/>
        <end position="1721"/>
    </location>
</feature>
<feature type="domain" description="DH 2" evidence="5">
    <location>
        <begin position="1969"/>
        <end position="2145"/>
    </location>
</feature>
<feature type="domain" description="PH 2" evidence="7">
    <location>
        <begin position="2157"/>
        <end position="2271"/>
    </location>
</feature>
<feature type="domain" description="SH3 2" evidence="9">
    <location>
        <begin position="2554"/>
        <end position="2619"/>
    </location>
</feature>
<feature type="domain" description="Ig-like C2-type">
    <location>
        <begin position="2688"/>
        <end position="2778"/>
    </location>
</feature>
<feature type="domain" description="Protein kinase" evidence="8">
    <location>
        <begin position="2799"/>
        <end position="3053"/>
    </location>
</feature>
<feature type="region of interest" description="Disordered" evidence="11">
    <location>
        <begin position="1"/>
        <end position="27"/>
    </location>
</feature>
<feature type="region of interest" description="Disordered" evidence="11">
    <location>
        <begin position="1601"/>
        <end position="1651"/>
    </location>
</feature>
<feature type="region of interest" description="Disordered" evidence="11">
    <location>
        <begin position="1781"/>
        <end position="1906"/>
    </location>
</feature>
<feature type="region of interest" description="Disordered" evidence="11">
    <location>
        <begin position="1927"/>
        <end position="1957"/>
    </location>
</feature>
<feature type="region of interest" description="Disordered" evidence="11">
    <location>
        <begin position="2287"/>
        <end position="2555"/>
    </location>
</feature>
<feature type="region of interest" description="Disordered" evidence="11">
    <location>
        <begin position="2642"/>
        <end position="2665"/>
    </location>
</feature>
<feature type="compositionally biased region" description="Low complexity" evidence="11">
    <location>
        <begin position="7"/>
        <end position="25"/>
    </location>
</feature>
<feature type="compositionally biased region" description="Polar residues" evidence="11">
    <location>
        <begin position="1629"/>
        <end position="1649"/>
    </location>
</feature>
<feature type="compositionally biased region" description="Basic residues" evidence="11">
    <location>
        <begin position="1794"/>
        <end position="1805"/>
    </location>
</feature>
<feature type="compositionally biased region" description="Basic and acidic residues" evidence="11">
    <location>
        <begin position="1806"/>
        <end position="1819"/>
    </location>
</feature>
<feature type="compositionally biased region" description="Low complexity" evidence="11">
    <location>
        <begin position="1837"/>
        <end position="1855"/>
    </location>
</feature>
<feature type="compositionally biased region" description="Low complexity" evidence="11">
    <location>
        <begin position="1936"/>
        <end position="1954"/>
    </location>
</feature>
<feature type="compositionally biased region" description="Gly residues" evidence="11">
    <location>
        <begin position="2291"/>
        <end position="2315"/>
    </location>
</feature>
<feature type="compositionally biased region" description="Low complexity" evidence="11">
    <location>
        <begin position="2316"/>
        <end position="2341"/>
    </location>
</feature>
<feature type="compositionally biased region" description="Low complexity" evidence="11">
    <location>
        <begin position="2371"/>
        <end position="2390"/>
    </location>
</feature>
<feature type="compositionally biased region" description="Basic and acidic residues" evidence="11">
    <location>
        <begin position="2402"/>
        <end position="2422"/>
    </location>
</feature>
<feature type="compositionally biased region" description="Polar residues" evidence="11">
    <location>
        <begin position="2426"/>
        <end position="2435"/>
    </location>
</feature>
<feature type="compositionally biased region" description="Polar residues" evidence="11">
    <location>
        <begin position="2459"/>
        <end position="2469"/>
    </location>
</feature>
<feature type="compositionally biased region" description="Low complexity" evidence="11">
    <location>
        <begin position="2491"/>
        <end position="2503"/>
    </location>
</feature>
<feature type="compositionally biased region" description="Polar residues" evidence="11">
    <location>
        <begin position="2530"/>
        <end position="2541"/>
    </location>
</feature>
<feature type="compositionally biased region" description="Low complexity" evidence="11">
    <location>
        <begin position="2542"/>
        <end position="2555"/>
    </location>
</feature>
<feature type="compositionally biased region" description="Basic and acidic residues" evidence="11">
    <location>
        <begin position="2646"/>
        <end position="2665"/>
    </location>
</feature>
<feature type="active site" description="Proton acceptor" evidence="8 10">
    <location>
        <position position="2918"/>
    </location>
</feature>
<feature type="binding site" evidence="8">
    <location>
        <begin position="2805"/>
        <end position="2813"/>
    </location>
    <ligand>
        <name>ATP</name>
        <dbReference type="ChEBI" id="CHEBI:30616"/>
    </ligand>
</feature>
<feature type="binding site" evidence="8">
    <location>
        <position position="2828"/>
    </location>
    <ligand>
        <name>ATP</name>
        <dbReference type="ChEBI" id="CHEBI:30616"/>
    </ligand>
</feature>
<feature type="modified residue" description="Phosphoserine" evidence="20">
    <location>
        <position position="1627"/>
    </location>
</feature>
<feature type="modified residue" description="Phosphoserine" evidence="2">
    <location>
        <position position="1632"/>
    </location>
</feature>
<feature type="modified residue" description="Phosphoserine" evidence="2">
    <location>
        <position position="1633"/>
    </location>
</feature>
<feature type="modified residue" description="Phosphothreonine" evidence="2">
    <location>
        <position position="1824"/>
    </location>
</feature>
<feature type="modified residue" description="Phosphoserine" evidence="20">
    <location>
        <position position="2282"/>
    </location>
</feature>
<feature type="modified residue" description="Phosphoserine" evidence="19 20">
    <location>
        <position position="2458"/>
    </location>
</feature>
<feature type="modified residue" description="Phosphoserine" evidence="20">
    <location>
        <position position="2462"/>
    </location>
</feature>
<feature type="modified residue" description="Phosphoserine" evidence="3">
    <location>
        <position position="2634"/>
    </location>
</feature>
<feature type="disulfide bond" evidence="6">
    <location>
        <begin position="2709"/>
        <end position="2762"/>
    </location>
</feature>
<feature type="splice variant" id="VSP_023308" description="In isoform 2." evidence="17">
    <original>ASSRLLVRPTSSETPSAAE</original>
    <variation>HYVDLCSVSVLAQFPYLSI</variation>
    <location>
        <begin position="1890"/>
        <end position="1908"/>
    </location>
</feature>
<feature type="splice variant" id="VSP_023309" description="In isoform 2." evidence="17">
    <location>
        <begin position="1909"/>
        <end position="3102"/>
    </location>
</feature>
<feature type="splice variant" id="VSP_037863" description="In isoform 3 and isoform 4." evidence="15 16">
    <original>G</original>
    <variation>GS</variation>
    <location>
        <position position="2548"/>
    </location>
</feature>
<feature type="splice variant" id="VSP_037864" description="In isoform 3." evidence="15">
    <original>EGSSSSNISTMLVTHEYTAV</original>
    <variation>VRVPGSLRPSTPPPLSRQLF</variation>
    <location>
        <begin position="2549"/>
        <end position="2568"/>
    </location>
</feature>
<feature type="splice variant" id="VSP_037865" description="In isoform 3." evidence="15">
    <location>
        <begin position="2569"/>
        <end position="3102"/>
    </location>
</feature>
<feature type="mutagenesis site" description="Abolishes Rac1 activation; when associated with E-1435." evidence="13">
    <original>Q</original>
    <variation>A</variation>
    <location>
        <position position="1427"/>
    </location>
</feature>
<feature type="mutagenesis site" description="Abolishes Rac1 activation; when associated with A-1427." evidence="13">
    <original>L</original>
    <variation>E</variation>
    <location>
        <position position="1435"/>
    </location>
</feature>
<feature type="sequence conflict" description="In Ref. 4; BAE32258." evidence="18" ref="4">
    <original>E</original>
    <variation>K</variation>
    <location>
        <position position="2863"/>
    </location>
</feature>
<name>TRIO_MOUSE</name>
<reference key="1">
    <citation type="journal article" date="2006" name="Mol. Cell. Biol.">
        <title>Solo/Trio8, a membrane-associated short isoform of Trio, modulates endosome dynamics and neurite elongation.</title>
        <authorList>
            <person name="Sun Y.-J."/>
            <person name="Nishikawa K."/>
            <person name="Yuda K."/>
            <person name="Wang Y.-L."/>
            <person name="Osaka H."/>
            <person name="Fukazawa N."/>
            <person name="Naito A."/>
            <person name="Wada K."/>
            <person name="Aoki S."/>
        </authorList>
    </citation>
    <scope>NUCLEOTIDE SEQUENCE [MRNA] (ISOFORM 2)</scope>
    <scope>TISSUE SPECIFICITY</scope>
    <scope>MUTAGENESIS OF GLN-1427 AND LEU-1435</scope>
    <scope>SUBCELLULAR LOCATION</scope>
    <source>
        <strain>C57BL/6J</strain>
        <tissue>Cerebellum</tissue>
    </source>
</reference>
<reference key="2">
    <citation type="journal article" date="2009" name="PLoS Biol.">
        <title>Lineage-specific biology revealed by a finished genome assembly of the mouse.</title>
        <authorList>
            <person name="Church D.M."/>
            <person name="Goodstadt L."/>
            <person name="Hillier L.W."/>
            <person name="Zody M.C."/>
            <person name="Goldstein S."/>
            <person name="She X."/>
            <person name="Bult C.J."/>
            <person name="Agarwala R."/>
            <person name="Cherry J.L."/>
            <person name="DiCuccio M."/>
            <person name="Hlavina W."/>
            <person name="Kapustin Y."/>
            <person name="Meric P."/>
            <person name="Maglott D."/>
            <person name="Birtle Z."/>
            <person name="Marques A.C."/>
            <person name="Graves T."/>
            <person name="Zhou S."/>
            <person name="Teague B."/>
            <person name="Potamousis K."/>
            <person name="Churas C."/>
            <person name="Place M."/>
            <person name="Herschleb J."/>
            <person name="Runnheim R."/>
            <person name="Forrest D."/>
            <person name="Amos-Landgraf J."/>
            <person name="Schwartz D.C."/>
            <person name="Cheng Z."/>
            <person name="Lindblad-Toh K."/>
            <person name="Eichler E.E."/>
            <person name="Ponting C.P."/>
        </authorList>
    </citation>
    <scope>NUCLEOTIDE SEQUENCE [LARGE SCALE GENOMIC DNA]</scope>
    <source>
        <strain>C57BL/6J</strain>
    </source>
</reference>
<reference key="3">
    <citation type="journal article" date="2004" name="Genome Res.">
        <title>The status, quality, and expansion of the NIH full-length cDNA project: the Mammalian Gene Collection (MGC).</title>
        <authorList>
            <consortium name="The MGC Project Team"/>
        </authorList>
    </citation>
    <scope>NUCLEOTIDE SEQUENCE [LARGE SCALE MRNA] OF 2062-3102 (ISOFORM 1)</scope>
    <scope>NUCLEOTIDE SEQUENCE [LARGE SCALE MRNA] OF 1145-3102 (ISOFORM 3)</scope>
    <source>
        <strain>C57BL/6J</strain>
        <tissue>Brain</tissue>
        <tissue>Olfactory epithelium</tissue>
    </source>
</reference>
<reference key="4">
    <citation type="journal article" date="2005" name="Science">
        <title>The transcriptional landscape of the mammalian genome.</title>
        <authorList>
            <person name="Carninci P."/>
            <person name="Kasukawa T."/>
            <person name="Katayama S."/>
            <person name="Gough J."/>
            <person name="Frith M.C."/>
            <person name="Maeda N."/>
            <person name="Oyama R."/>
            <person name="Ravasi T."/>
            <person name="Lenhard B."/>
            <person name="Wells C."/>
            <person name="Kodzius R."/>
            <person name="Shimokawa K."/>
            <person name="Bajic V.B."/>
            <person name="Brenner S.E."/>
            <person name="Batalov S."/>
            <person name="Forrest A.R."/>
            <person name="Zavolan M."/>
            <person name="Davis M.J."/>
            <person name="Wilming L.G."/>
            <person name="Aidinis V."/>
            <person name="Allen J.E."/>
            <person name="Ambesi-Impiombato A."/>
            <person name="Apweiler R."/>
            <person name="Aturaliya R.N."/>
            <person name="Bailey T.L."/>
            <person name="Bansal M."/>
            <person name="Baxter L."/>
            <person name="Beisel K.W."/>
            <person name="Bersano T."/>
            <person name="Bono H."/>
            <person name="Chalk A.M."/>
            <person name="Chiu K.P."/>
            <person name="Choudhary V."/>
            <person name="Christoffels A."/>
            <person name="Clutterbuck D.R."/>
            <person name="Crowe M.L."/>
            <person name="Dalla E."/>
            <person name="Dalrymple B.P."/>
            <person name="de Bono B."/>
            <person name="Della Gatta G."/>
            <person name="di Bernardo D."/>
            <person name="Down T."/>
            <person name="Engstrom P."/>
            <person name="Fagiolini M."/>
            <person name="Faulkner G."/>
            <person name="Fletcher C.F."/>
            <person name="Fukushima T."/>
            <person name="Furuno M."/>
            <person name="Futaki S."/>
            <person name="Gariboldi M."/>
            <person name="Georgii-Hemming P."/>
            <person name="Gingeras T.R."/>
            <person name="Gojobori T."/>
            <person name="Green R.E."/>
            <person name="Gustincich S."/>
            <person name="Harbers M."/>
            <person name="Hayashi Y."/>
            <person name="Hensch T.K."/>
            <person name="Hirokawa N."/>
            <person name="Hill D."/>
            <person name="Huminiecki L."/>
            <person name="Iacono M."/>
            <person name="Ikeo K."/>
            <person name="Iwama A."/>
            <person name="Ishikawa T."/>
            <person name="Jakt M."/>
            <person name="Kanapin A."/>
            <person name="Katoh M."/>
            <person name="Kawasawa Y."/>
            <person name="Kelso J."/>
            <person name="Kitamura H."/>
            <person name="Kitano H."/>
            <person name="Kollias G."/>
            <person name="Krishnan S.P."/>
            <person name="Kruger A."/>
            <person name="Kummerfeld S.K."/>
            <person name="Kurochkin I.V."/>
            <person name="Lareau L.F."/>
            <person name="Lazarevic D."/>
            <person name="Lipovich L."/>
            <person name="Liu J."/>
            <person name="Liuni S."/>
            <person name="McWilliam S."/>
            <person name="Madan Babu M."/>
            <person name="Madera M."/>
            <person name="Marchionni L."/>
            <person name="Matsuda H."/>
            <person name="Matsuzawa S."/>
            <person name="Miki H."/>
            <person name="Mignone F."/>
            <person name="Miyake S."/>
            <person name="Morris K."/>
            <person name="Mottagui-Tabar S."/>
            <person name="Mulder N."/>
            <person name="Nakano N."/>
            <person name="Nakauchi H."/>
            <person name="Ng P."/>
            <person name="Nilsson R."/>
            <person name="Nishiguchi S."/>
            <person name="Nishikawa S."/>
            <person name="Nori F."/>
            <person name="Ohara O."/>
            <person name="Okazaki Y."/>
            <person name="Orlando V."/>
            <person name="Pang K.C."/>
            <person name="Pavan W.J."/>
            <person name="Pavesi G."/>
            <person name="Pesole G."/>
            <person name="Petrovsky N."/>
            <person name="Piazza S."/>
            <person name="Reed J."/>
            <person name="Reid J.F."/>
            <person name="Ring B.Z."/>
            <person name="Ringwald M."/>
            <person name="Rost B."/>
            <person name="Ruan Y."/>
            <person name="Salzberg S.L."/>
            <person name="Sandelin A."/>
            <person name="Schneider C."/>
            <person name="Schoenbach C."/>
            <person name="Sekiguchi K."/>
            <person name="Semple C.A."/>
            <person name="Seno S."/>
            <person name="Sessa L."/>
            <person name="Sheng Y."/>
            <person name="Shibata Y."/>
            <person name="Shimada H."/>
            <person name="Shimada K."/>
            <person name="Silva D."/>
            <person name="Sinclair B."/>
            <person name="Sperling S."/>
            <person name="Stupka E."/>
            <person name="Sugiura K."/>
            <person name="Sultana R."/>
            <person name="Takenaka Y."/>
            <person name="Taki K."/>
            <person name="Tammoja K."/>
            <person name="Tan S.L."/>
            <person name="Tang S."/>
            <person name="Taylor M.S."/>
            <person name="Tegner J."/>
            <person name="Teichmann S.A."/>
            <person name="Ueda H.R."/>
            <person name="van Nimwegen E."/>
            <person name="Verardo R."/>
            <person name="Wei C.L."/>
            <person name="Yagi K."/>
            <person name="Yamanishi H."/>
            <person name="Zabarovsky E."/>
            <person name="Zhu S."/>
            <person name="Zimmer A."/>
            <person name="Hide W."/>
            <person name="Bult C."/>
            <person name="Grimmond S.M."/>
            <person name="Teasdale R.D."/>
            <person name="Liu E.T."/>
            <person name="Brusic V."/>
            <person name="Quackenbush J."/>
            <person name="Wahlestedt C."/>
            <person name="Mattick J.S."/>
            <person name="Hume D.A."/>
            <person name="Kai C."/>
            <person name="Sasaki D."/>
            <person name="Tomaru Y."/>
            <person name="Fukuda S."/>
            <person name="Kanamori-Katayama M."/>
            <person name="Suzuki M."/>
            <person name="Aoki J."/>
            <person name="Arakawa T."/>
            <person name="Iida J."/>
            <person name="Imamura K."/>
            <person name="Itoh M."/>
            <person name="Kato T."/>
            <person name="Kawaji H."/>
            <person name="Kawagashira N."/>
            <person name="Kawashima T."/>
            <person name="Kojima M."/>
            <person name="Kondo S."/>
            <person name="Konno H."/>
            <person name="Nakano K."/>
            <person name="Ninomiya N."/>
            <person name="Nishio T."/>
            <person name="Okada M."/>
            <person name="Plessy C."/>
            <person name="Shibata K."/>
            <person name="Shiraki T."/>
            <person name="Suzuki S."/>
            <person name="Tagami M."/>
            <person name="Waki K."/>
            <person name="Watahiki A."/>
            <person name="Okamura-Oho Y."/>
            <person name="Suzuki H."/>
            <person name="Kawai J."/>
            <person name="Hayashizaki Y."/>
        </authorList>
    </citation>
    <scope>NUCLEOTIDE SEQUENCE [LARGE SCALE MRNA] OF 2521-3102 (ISOFORM 4)</scope>
    <source>
        <strain>NOD</strain>
        <tissue>Thymus</tissue>
    </source>
</reference>
<reference key="5">
    <citation type="journal article" date="2009" name="Mol. Cell. Proteomics">
        <title>Large scale localization of protein phosphorylation by use of electron capture dissociation mass spectrometry.</title>
        <authorList>
            <person name="Sweet S.M."/>
            <person name="Bailey C.M."/>
            <person name="Cunningham D.L."/>
            <person name="Heath J.K."/>
            <person name="Cooper H.J."/>
        </authorList>
    </citation>
    <scope>PHOSPHORYLATION [LARGE SCALE ANALYSIS] AT SER-2458</scope>
    <scope>IDENTIFICATION BY MASS SPECTROMETRY [LARGE SCALE ANALYSIS]</scope>
    <source>
        <tissue>Embryonic fibroblast</tissue>
    </source>
</reference>
<reference key="6">
    <citation type="journal article" date="2010" name="Cell">
        <title>A tissue-specific atlas of mouse protein phosphorylation and expression.</title>
        <authorList>
            <person name="Huttlin E.L."/>
            <person name="Jedrychowski M.P."/>
            <person name="Elias J.E."/>
            <person name="Goswami T."/>
            <person name="Rad R."/>
            <person name="Beausoleil S.A."/>
            <person name="Villen J."/>
            <person name="Haas W."/>
            <person name="Sowa M.E."/>
            <person name="Gygi S.P."/>
        </authorList>
    </citation>
    <scope>PHOSPHORYLATION [LARGE SCALE ANALYSIS] AT SER-1627; SER-2282; SER-2458 AND SER-2462</scope>
    <scope>IDENTIFICATION BY MASS SPECTROMETRY [LARGE SCALE ANALYSIS]</scope>
    <source>
        <tissue>Brain</tissue>
        <tissue>Brown adipose tissue</tissue>
        <tissue>Heart</tissue>
        <tissue>Kidney</tissue>
        <tissue>Liver</tissue>
        <tissue>Lung</tissue>
        <tissue>Spleen</tissue>
        <tissue>Testis</tissue>
    </source>
</reference>
<reference key="7">
    <citation type="journal article" date="2011" name="Sci. Signal.">
        <title>Neuronal growth cone retraction relies on proneurotrophin receptor signaling through Rac.</title>
        <authorList>
            <person name="Deinhardt K."/>
            <person name="Kim T."/>
            <person name="Spellman D.S."/>
            <person name="Mains R.E."/>
            <person name="Eipper B.A."/>
            <person name="Neubert T.A."/>
            <person name="Chao M.V."/>
            <person name="Hempstead B.L."/>
        </authorList>
    </citation>
    <scope>SUBCELLULAR LOCATION</scope>
</reference>
<reference key="8">
    <citation type="journal article" date="2012" name="PLoS ONE">
        <title>ANKRD26 and its interacting partners TRIO, GPS2, HMMR and DIPA regulate adipogenesis in 3T3-L1 cells.</title>
        <authorList>
            <person name="Liu X.F."/>
            <person name="Bera T.K."/>
            <person name="Kahue C."/>
            <person name="Escobar T."/>
            <person name="Fei Z."/>
            <person name="Raciti G.A."/>
            <person name="Pastan I."/>
        </authorList>
    </citation>
    <scope>FUNCTION</scope>
</reference>
<keyword id="KW-0025">Alternative splicing</keyword>
<keyword id="KW-0067">ATP-binding</keyword>
<keyword id="KW-0966">Cell projection</keyword>
<keyword id="KW-0963">Cytoplasm</keyword>
<keyword id="KW-1015">Disulfide bond</keyword>
<keyword id="KW-0967">Endosome</keyword>
<keyword id="KW-0344">Guanine-nucleotide releasing factor</keyword>
<keyword id="KW-0393">Immunoglobulin domain</keyword>
<keyword id="KW-0418">Kinase</keyword>
<keyword id="KW-0547">Nucleotide-binding</keyword>
<keyword id="KW-0597">Phosphoprotein</keyword>
<keyword id="KW-1185">Reference proteome</keyword>
<keyword id="KW-0677">Repeat</keyword>
<keyword id="KW-0723">Serine/threonine-protein kinase</keyword>
<keyword id="KW-0728">SH3 domain</keyword>
<keyword id="KW-0808">Transferase</keyword>
<sequence length="3102" mass="347861">MSGSSGGATAPAASSGPAAAASAAGSGCGGGAGEGAEEAAKDLADIAAFFRSGFRKNDEMKAMDVLPILKEKVAYLSGGRDKRGGPILTFPARSNHDRIRQEDLRRLISYLACIPSEEVCKRGFTVIVDMRGSKWDSIKPLLKILQESFPCCIHIALIIKPDNFWQKQRTNFGSSKFEFETNMVSLEGLTKVVDPSQLTPEFDGCLEYNHEEWIEIRVAFEEYISNAAHMLSRLEELQDVLAKKELPQDLEGARNMIDEHSQLKKKVIKAPIEDLDLEGQKLLQRIQSSDSFPKKNSGSGNADLQNLLPKVSTMLDRLHSTRQHLHQMWHVRKLKLDQCFQLRLFEQDAEKMFDWITHNKGLFLNSYTEIGTSHPHAMELQTQHNHFAMNCMNVYVNINRIMSVANRLVESGHYASQQIKQIANQLEQEWKAFAAALDERSTLLDMSSIFHQKAEKYMSNVDSWCKACGEVDLPSELQDLEDAIHHHQGIYEHITLAYSEVSQDGKSLLDKLQRPLTPGSSDSLTASANYSKAVHHVLDVIHEVLHHQRQLENIWQHRKVRLHQRLQLCVFQQDVQQVLDWIENHGEAFLSKHTGVGKSLHRARALQKRHEDFEEVAQNTYTNADKLLEAAEQLAQTGECDPEEIYQAAHQLEDRIQDFVRRVEQRKILLDMSVSFHTHVKELWTWLEELQKELLDDVYAESVEAVQDLIKRFGQQQQTTLQVTVNVIKEGEDLIQQLRDSAISSNKTPHNSSINHIETVLQQLDEAQSQMEELFQERKIKLELFLQLRIFERDAIDIISDLESWNDELSQQMNDFDTEDLTIAEQRLQHHADKALTMNNLTFDVIHQGQDLLQYVNEVQASGVELLCDRDVDMATRVQDLLEFLHEKQQELDLAAEQHRKHLEQCVQLRHLQAEVKQVLGWIRNGESMLNAGLITASSLQEAEQLQREHEQFQHAIEKTHQSALQVQQKAEAMLQANHYDMDMIRDCAEKVASHWQQLMLKMEDRLKLVNASVAFYKTSEQVCSVLESLEQEYKREEDWCGGADKLGPNSETDHVTPMISKHLEQKEAFLKACTLARRNADVFLKYLHRNSVSMPGMVTHIKAPEQQVKNILNELFQRENRVLHYWTMRKRRLDQCQQYVVFERSAKQALEWIHDNGEFYLSTHTSTGSSIQHTQELLKEHEEFQITAKQTKERVKLLIQLADGFCEKGHAHAAEIKKCVTAVDKRYRDFSLRMEKYRTSLEKALGISSDSNKSSKSLQLDIIPASIPGSEVKLRDAAHELNEEKRKSARRKEFIMAELIQTEKAYVRDLRECMDTYLWEMTSGVEEIPPGIVNKELIIFGNMQEIYEFHNNIFLKELEKYEQLPEDVGHCFVTWADKFQMYVTYCKNKPDSTQLILEHAGSYFDEIQQRHGLANSISSYLIKPVQRITKYQLLLKELLTCCEEGKGEIKDGLEVMLSVPKRANDAMHLSMLEGFDENIESQGELILQESFQVWDPKTLIRKGRERHLFLFEMSLVFSKEVKDSSGRSKYLYKSKLFTSELGVTEHVEGDPCKFALWVGRTPTSDNKIVLKASSIENKQDWIKHIREVIQERTVHLRGALKEPIHIPKTAPAARQKGRRDGEDLDSQGDGSSQPDTISIASRTSQNTLDSDKLSGGCELTVVIHDFTACNSNELTIRRGQTVEVLERPHDKPDWCLVRTTDRSPAAEGLVPCGSLCIAHSRSSMEMEGIFNHKDSLSVSSNDASPPASVASLQPHMIGAQSSPGPKRPGNTLRKWLTSPVRRLSSGKADGHAKKLAHKHKKSREVRKSADAGSQKDSDDSAATPQDETIEERGRNEGLSSGTLSKSSSSGMQSCGEEEGEEGADAVPLPPPMAIQQHSLLQPDSQDDKASSRLLVRPTSSETPSAAELVSAIEELVKSKMALEDRPSSLLVDQGDSSSPSFNPSDNSLLSSSSPIDEMEERKCSSLKRRHYVLQELVETERDYVRDLGCVVEGYMALMKEDGVPDDMKGKDKIVFGNIHQIYDWHRDFFLGELEKCLEDPEKLGSLFVKHERRLHMYIVYCQNKPKSEHIVSEYIDTFFEDLKQRLGHRLQLTDLLIKPVQRIMKYQLLLKDFLKYSKKASLDTSELEKAVEVMCIVPKRCNDMMNVGRLQGFDGKIVAQGKLLLQDTFLVTDQDAGLLPRCKERRVFLFEQIVIFSEPLDKKKGFSMPGFLFKNSIKVSCLCLEENVESDPCKFALTSRTGDAVETFVLHSSSPSVRQTWIHEINQILENQRNFLNALTSPIEYQRNHSGGGGSGSGGSSGGGGGSGGSGASSGGSSSHGSGPSSCSSGPSSSRSRPSRIPQPVRHHPPMLVSSAASSQAEADKMSGMSAPSPSLPTPSSSLALEASLGQPSRLPLSGDSEGHERETEPIPKMKVMESPRKAPGSTSGTSQDGNTKDARGNLGSLPLGKTRPGAVSPLNSPLSTTFPSPFGKEAFPPSSPLQKGGSFWSSIPASPASRPSSFTFPGDSDSLQRQTHRHAAPSKDTDRMSTCSSASEQSVQSTQSNGEGSSSSNISTMLVTHEYTAVKEDEINVYQGEVVQILASNQQNMFLVFRAATDQCPAAEGWIPGFVLGHTSAVIMENPDGTLKKSTSWHTALRLRKKSEKKDKDGKRDGKLENGYRKPREGLSNKVSVKLLNPNYIYDVPPEFVIPLSEVTCETGETVVFRCRVCGRPKASITWKGPEHNTLNNDDHYSISYSDIGEATLKIIGVSTEDDGIYTCIAVNDMGSASSSASLRVLGPGSDGIVVTWKDNFDAFYSEVAELGRGRFAVVKKCDQKGTKRAVATKFVNKKLMKRDQVTHELGILQNLQHPLLVSLLDTFETPTSYVLVLEMADQGRLLDCVVRWGSLTEGKVRAHLGEVLEAVRYLHNCRIAHLDLKPENILVDQSLAKPTIKLADFGDAVQLNTTYYIHQLLGNPEFAAPEIILGNPVSLTADTWSVGVLTYVLLSGVSPFLDDSVEETCLNICRLDFSFPEDYFQGVSQKAKEFVCFLLQEDPAKRPSAALALQEQWLQAGNGSGKGTGVLDTSRLTSFIERRKHQNDVRPIRSIKNFLQSRLLPRV</sequence>
<proteinExistence type="evidence at protein level"/>